<protein>
    <recommendedName>
        <fullName evidence="1">4-hydroxybenzoate octaprenyltransferase</fullName>
        <ecNumber evidence="1">2.5.1.39</ecNumber>
    </recommendedName>
    <alternativeName>
        <fullName evidence="1">4-HB polyprenyltransferase</fullName>
    </alternativeName>
</protein>
<feature type="chain" id="PRO_0000262861" description="4-hydroxybenzoate octaprenyltransferase">
    <location>
        <begin position="1"/>
        <end position="299"/>
    </location>
</feature>
<feature type="transmembrane region" description="Helical" evidence="1">
    <location>
        <begin position="33"/>
        <end position="53"/>
    </location>
</feature>
<feature type="transmembrane region" description="Helical" evidence="1">
    <location>
        <begin position="56"/>
        <end position="76"/>
    </location>
</feature>
<feature type="transmembrane region" description="Helical" evidence="1">
    <location>
        <begin position="105"/>
        <end position="125"/>
    </location>
</feature>
<feature type="transmembrane region" description="Helical" evidence="1">
    <location>
        <begin position="151"/>
        <end position="171"/>
    </location>
</feature>
<feature type="transmembrane region" description="Helical" evidence="1">
    <location>
        <begin position="180"/>
        <end position="200"/>
    </location>
</feature>
<feature type="transmembrane region" description="Helical" evidence="1">
    <location>
        <begin position="214"/>
        <end position="234"/>
    </location>
</feature>
<feature type="transmembrane region" description="Helical" evidence="1">
    <location>
        <begin position="247"/>
        <end position="267"/>
    </location>
</feature>
<feature type="transmembrane region" description="Helical" evidence="1">
    <location>
        <begin position="278"/>
        <end position="298"/>
    </location>
</feature>
<comment type="function">
    <text evidence="1">Catalyzes the prenylation of para-hydroxybenzoate (PHB) with an all-trans polyprenyl group. Mediates the second step in the final reaction sequence of ubiquinone-8 (UQ-8) biosynthesis, which is the condensation of the polyisoprenoid side chain with PHB, generating the first membrane-bound Q intermediate 3-octaprenyl-4-hydroxybenzoate.</text>
</comment>
<comment type="catalytic activity">
    <reaction evidence="1">
        <text>all-trans-octaprenyl diphosphate + 4-hydroxybenzoate = 4-hydroxy-3-(all-trans-octaprenyl)benzoate + diphosphate</text>
        <dbReference type="Rhea" id="RHEA:27782"/>
        <dbReference type="ChEBI" id="CHEBI:1617"/>
        <dbReference type="ChEBI" id="CHEBI:17879"/>
        <dbReference type="ChEBI" id="CHEBI:33019"/>
        <dbReference type="ChEBI" id="CHEBI:57711"/>
        <dbReference type="EC" id="2.5.1.39"/>
    </reaction>
</comment>
<comment type="cofactor">
    <cofactor evidence="1">
        <name>Mg(2+)</name>
        <dbReference type="ChEBI" id="CHEBI:18420"/>
    </cofactor>
</comment>
<comment type="pathway">
    <text evidence="1">Cofactor biosynthesis; ubiquinone biosynthesis.</text>
</comment>
<comment type="subcellular location">
    <subcellularLocation>
        <location evidence="1">Cell inner membrane</location>
        <topology evidence="1">Multi-pass membrane protein</topology>
    </subcellularLocation>
</comment>
<comment type="similarity">
    <text evidence="1">Belongs to the UbiA prenyltransferase family.</text>
</comment>
<evidence type="ECO:0000255" key="1">
    <source>
        <dbReference type="HAMAP-Rule" id="MF_01635"/>
    </source>
</evidence>
<proteinExistence type="inferred from homology"/>
<name>UBIA_XYLFT</name>
<organism>
    <name type="scientific">Xylella fastidiosa (strain Temecula1 / ATCC 700964)</name>
    <dbReference type="NCBI Taxonomy" id="183190"/>
    <lineage>
        <taxon>Bacteria</taxon>
        <taxon>Pseudomonadati</taxon>
        <taxon>Pseudomonadota</taxon>
        <taxon>Gammaproteobacteria</taxon>
        <taxon>Lysobacterales</taxon>
        <taxon>Lysobacteraceae</taxon>
        <taxon>Xylella</taxon>
    </lineage>
</organism>
<dbReference type="EC" id="2.5.1.39" evidence="1"/>
<dbReference type="EMBL" id="AE009442">
    <property type="protein sequence ID" value="AAO27953.1"/>
    <property type="molecule type" value="Genomic_DNA"/>
</dbReference>
<dbReference type="RefSeq" id="WP_004087154.1">
    <property type="nucleotide sequence ID" value="NC_004556.1"/>
</dbReference>
<dbReference type="SMR" id="Q87F82"/>
<dbReference type="GeneID" id="93903736"/>
<dbReference type="KEGG" id="xft:PD_0046"/>
<dbReference type="HOGENOM" id="CLU_034879_1_0_6"/>
<dbReference type="UniPathway" id="UPA00232"/>
<dbReference type="Proteomes" id="UP000002516">
    <property type="component" value="Chromosome"/>
</dbReference>
<dbReference type="GO" id="GO:0005886">
    <property type="term" value="C:plasma membrane"/>
    <property type="evidence" value="ECO:0007669"/>
    <property type="project" value="UniProtKB-SubCell"/>
</dbReference>
<dbReference type="GO" id="GO:0008412">
    <property type="term" value="F:4-hydroxybenzoate polyprenyltransferase activity"/>
    <property type="evidence" value="ECO:0007669"/>
    <property type="project" value="UniProtKB-UniRule"/>
</dbReference>
<dbReference type="GO" id="GO:0006744">
    <property type="term" value="P:ubiquinone biosynthetic process"/>
    <property type="evidence" value="ECO:0007669"/>
    <property type="project" value="UniProtKB-UniRule"/>
</dbReference>
<dbReference type="CDD" id="cd13959">
    <property type="entry name" value="PT_UbiA_COQ2"/>
    <property type="match status" value="1"/>
</dbReference>
<dbReference type="FunFam" id="1.10.357.140:FF:000002">
    <property type="entry name" value="4-hydroxybenzoate octaprenyltransferase"/>
    <property type="match status" value="1"/>
</dbReference>
<dbReference type="FunFam" id="1.20.120.1780:FF:000001">
    <property type="entry name" value="4-hydroxybenzoate octaprenyltransferase"/>
    <property type="match status" value="1"/>
</dbReference>
<dbReference type="Gene3D" id="1.10.357.140">
    <property type="entry name" value="UbiA prenyltransferase"/>
    <property type="match status" value="1"/>
</dbReference>
<dbReference type="Gene3D" id="1.20.120.1780">
    <property type="entry name" value="UbiA prenyltransferase"/>
    <property type="match status" value="1"/>
</dbReference>
<dbReference type="HAMAP" id="MF_01635">
    <property type="entry name" value="UbiA"/>
    <property type="match status" value="1"/>
</dbReference>
<dbReference type="InterPro" id="IPR006370">
    <property type="entry name" value="HB_polyprenyltransferase-like"/>
</dbReference>
<dbReference type="InterPro" id="IPR039653">
    <property type="entry name" value="Prenyltransferase"/>
</dbReference>
<dbReference type="InterPro" id="IPR000537">
    <property type="entry name" value="UbiA_prenyltransferase"/>
</dbReference>
<dbReference type="InterPro" id="IPR030470">
    <property type="entry name" value="UbiA_prenylTrfase_CS"/>
</dbReference>
<dbReference type="InterPro" id="IPR044878">
    <property type="entry name" value="UbiA_sf"/>
</dbReference>
<dbReference type="NCBIfam" id="TIGR01474">
    <property type="entry name" value="ubiA_proteo"/>
    <property type="match status" value="1"/>
</dbReference>
<dbReference type="PANTHER" id="PTHR11048:SF28">
    <property type="entry name" value="4-HYDROXYBENZOATE POLYPRENYLTRANSFERASE, MITOCHONDRIAL"/>
    <property type="match status" value="1"/>
</dbReference>
<dbReference type="PANTHER" id="PTHR11048">
    <property type="entry name" value="PRENYLTRANSFERASES"/>
    <property type="match status" value="1"/>
</dbReference>
<dbReference type="Pfam" id="PF01040">
    <property type="entry name" value="UbiA"/>
    <property type="match status" value="1"/>
</dbReference>
<dbReference type="PROSITE" id="PS00943">
    <property type="entry name" value="UBIA"/>
    <property type="match status" value="1"/>
</dbReference>
<gene>
    <name evidence="1" type="primary">ubiA</name>
    <name type="ordered locus">PD_0046</name>
</gene>
<sequence>MAYERFTSAITLLLHWRNRLDPYWKLARGDRPVGFLLLLWPTWWALWLAADGVPPWWTLCVFTTGIWLTRSAGCVINDYTDRWLDPHVERTCTRPLVTGTVSPRNALLMFGTLMLIAFGLVLTMNRLTVLLSVAGLFLAMTYPYLKRYTHLPQVYLGIAFGWGIPMAFAAIQGKVPTLAWLLYVANILWTTAYDTWYAMVDRDDDIKMGAKSTAILFADLDLVVQGVLYTLMLLTLCLVGLRATLSHTYWISLISAVALIGYQFIIARRREPTACFRAFMHNNWVGMTIFAGIALATTH</sequence>
<reference key="1">
    <citation type="journal article" date="2003" name="J. Bacteriol.">
        <title>Comparative analyses of the complete genome sequences of Pierce's disease and citrus variegated chlorosis strains of Xylella fastidiosa.</title>
        <authorList>
            <person name="Van Sluys M.A."/>
            <person name="de Oliveira M.C."/>
            <person name="Monteiro-Vitorello C.B."/>
            <person name="Miyaki C.Y."/>
            <person name="Furlan L.R."/>
            <person name="Camargo L.E.A."/>
            <person name="da Silva A.C.R."/>
            <person name="Moon D.H."/>
            <person name="Takita M.A."/>
            <person name="Lemos E.G.M."/>
            <person name="Machado M.A."/>
            <person name="Ferro M.I.T."/>
            <person name="da Silva F.R."/>
            <person name="Goldman M.H.S."/>
            <person name="Goldman G.H."/>
            <person name="Lemos M.V.F."/>
            <person name="El-Dorry H."/>
            <person name="Tsai S.M."/>
            <person name="Carrer H."/>
            <person name="Carraro D.M."/>
            <person name="de Oliveira R.C."/>
            <person name="Nunes L.R."/>
            <person name="Siqueira W.J."/>
            <person name="Coutinho L.L."/>
            <person name="Kimura E.T."/>
            <person name="Ferro E.S."/>
            <person name="Harakava R."/>
            <person name="Kuramae E.E."/>
            <person name="Marino C.L."/>
            <person name="Giglioti E."/>
            <person name="Abreu I.L."/>
            <person name="Alves L.M.C."/>
            <person name="do Amaral A.M."/>
            <person name="Baia G.S."/>
            <person name="Blanco S.R."/>
            <person name="Brito M.S."/>
            <person name="Cannavan F.S."/>
            <person name="Celestino A.V."/>
            <person name="da Cunha A.F."/>
            <person name="Fenille R.C."/>
            <person name="Ferro J.A."/>
            <person name="Formighieri E.F."/>
            <person name="Kishi L.T."/>
            <person name="Leoni S.G."/>
            <person name="Oliveira A.R."/>
            <person name="Rosa V.E. Jr."/>
            <person name="Sassaki F.T."/>
            <person name="Sena J.A.D."/>
            <person name="de Souza A.A."/>
            <person name="Truffi D."/>
            <person name="Tsukumo F."/>
            <person name="Yanai G.M."/>
            <person name="Zaros L.G."/>
            <person name="Civerolo E.L."/>
            <person name="Simpson A.J.G."/>
            <person name="Almeida N.F. Jr."/>
            <person name="Setubal J.C."/>
            <person name="Kitajima J.P."/>
        </authorList>
    </citation>
    <scope>NUCLEOTIDE SEQUENCE [LARGE SCALE GENOMIC DNA]</scope>
    <source>
        <strain>Temecula1 / ATCC 700964</strain>
    </source>
</reference>
<keyword id="KW-0997">Cell inner membrane</keyword>
<keyword id="KW-1003">Cell membrane</keyword>
<keyword id="KW-0460">Magnesium</keyword>
<keyword id="KW-0472">Membrane</keyword>
<keyword id="KW-1185">Reference proteome</keyword>
<keyword id="KW-0808">Transferase</keyword>
<keyword id="KW-0812">Transmembrane</keyword>
<keyword id="KW-1133">Transmembrane helix</keyword>
<keyword id="KW-0831">Ubiquinone biosynthesis</keyword>
<accession>Q87F82</accession>